<accession>Q8LPL2</accession>
<accession>Q9LW69</accession>
<organism>
    <name type="scientific">Arabidopsis thaliana</name>
    <name type="common">Mouse-ear cress</name>
    <dbReference type="NCBI Taxonomy" id="3702"/>
    <lineage>
        <taxon>Eukaryota</taxon>
        <taxon>Viridiplantae</taxon>
        <taxon>Streptophyta</taxon>
        <taxon>Embryophyta</taxon>
        <taxon>Tracheophyta</taxon>
        <taxon>Spermatophyta</taxon>
        <taxon>Magnoliopsida</taxon>
        <taxon>eudicotyledons</taxon>
        <taxon>Gunneridae</taxon>
        <taxon>Pentapetalae</taxon>
        <taxon>rosids</taxon>
        <taxon>malvids</taxon>
        <taxon>Brassicales</taxon>
        <taxon>Brassicaceae</taxon>
        <taxon>Camelineae</taxon>
        <taxon>Arabidopsis</taxon>
    </lineage>
</organism>
<evidence type="ECO:0000255" key="1"/>
<evidence type="ECO:0000269" key="2">
    <source>
    </source>
</evidence>
<evidence type="ECO:0000269" key="3">
    <source>
    </source>
</evidence>
<evidence type="ECO:0000305" key="4"/>
<sequence length="591" mass="65333">MENPPDQTESKETLQQPITRRRTKGGLLTMPFIIANEGFEKVASYGLLQNMILYLMSDYRLGLVKGQTVLFMWVAATNFMPLVGAFLSDSYLGRFLTIVIASLSSLLGMVVLWLTAMLPQVKPSPCVATAGTNCSSATSSQLALLYTAFALISIGSGGIRPCSLAFGADQLDNKENPKNERVLESFFGWYYASSSVAVLIAFTVIVYIQDHLGWKIGFGIPAILMLLAGFLFVFASPLYVKRDVSKSLFTGLAQVVAAAYVKRNLTLPDHHDSRDCYYRLKDSELKAPSDKLRFLNKACAISNRDEDLGSDGLALNQWRLCTTDQVEKLKALVKVIPVWSTGIMMSINVSQNSFQLLQAKSMDRRLSSNSTFQIPAGSFGMFTIIALISWVVLYDRAILPLASKIRGRPVRVNVKIRMGLGLFISFLAMAVSATVEHYRRKTAISQGLANDANSTVSISAMWLVPQYVLHGLAEALTGIGQTEFFYTEFPKSMSSIAASLFGLGMAVANILASVILNAVKNSSKQGNVSWIEDNINKGHYDYYYWVLAILSFVNVIYYVVCSWSYGPTVDQVRNDKVNGMRKEEEEVIKLN</sequence>
<dbReference type="EMBL" id="AB012247">
    <property type="protein sequence ID" value="BAB02684.1"/>
    <property type="status" value="ALT_SEQ"/>
    <property type="molecule type" value="Genomic_DNA"/>
</dbReference>
<dbReference type="EMBL" id="CP002686">
    <property type="protein sequence ID" value="AEE75781.1"/>
    <property type="molecule type" value="Genomic_DNA"/>
</dbReference>
<dbReference type="EMBL" id="AY099590">
    <property type="protein sequence ID" value="AAM20441.1"/>
    <property type="molecule type" value="mRNA"/>
</dbReference>
<dbReference type="RefSeq" id="NP_188239.1">
    <property type="nucleotide sequence ID" value="NM_112489.3"/>
</dbReference>
<dbReference type="SMR" id="Q8LPL2"/>
<dbReference type="BioGRID" id="6198">
    <property type="interactions" value="11"/>
</dbReference>
<dbReference type="FunCoup" id="Q8LPL2">
    <property type="interactions" value="223"/>
</dbReference>
<dbReference type="IntAct" id="Q8LPL2">
    <property type="interactions" value="11"/>
</dbReference>
<dbReference type="STRING" id="3702.Q8LPL2"/>
<dbReference type="PaxDb" id="3702-AT3G16180.1"/>
<dbReference type="ProteomicsDB" id="226420"/>
<dbReference type="EnsemblPlants" id="AT3G16180.1">
    <property type="protein sequence ID" value="AT3G16180.1"/>
    <property type="gene ID" value="AT3G16180"/>
</dbReference>
<dbReference type="GeneID" id="820864"/>
<dbReference type="Gramene" id="AT3G16180.1">
    <property type="protein sequence ID" value="AT3G16180.1"/>
    <property type="gene ID" value="AT3G16180"/>
</dbReference>
<dbReference type="KEGG" id="ath:AT3G16180"/>
<dbReference type="Araport" id="AT3G16180"/>
<dbReference type="TAIR" id="AT3G16180">
    <property type="gene designation" value="NRT1.12"/>
</dbReference>
<dbReference type="eggNOG" id="KOG1237">
    <property type="taxonomic scope" value="Eukaryota"/>
</dbReference>
<dbReference type="HOGENOM" id="CLU_009313_4_2_1"/>
<dbReference type="InParanoid" id="Q8LPL2"/>
<dbReference type="OMA" id="YLICSWA"/>
<dbReference type="PhylomeDB" id="Q8LPL2"/>
<dbReference type="SABIO-RK" id="Q8LPL2"/>
<dbReference type="PRO" id="PR:Q8LPL2"/>
<dbReference type="Proteomes" id="UP000006548">
    <property type="component" value="Chromosome 3"/>
</dbReference>
<dbReference type="ExpressionAtlas" id="Q8LPL2">
    <property type="expression patterns" value="baseline and differential"/>
</dbReference>
<dbReference type="GO" id="GO:0005886">
    <property type="term" value="C:plasma membrane"/>
    <property type="evidence" value="ECO:0007669"/>
    <property type="project" value="UniProtKB-SubCell"/>
</dbReference>
<dbReference type="GO" id="GO:0080054">
    <property type="term" value="F:low-affinity nitrate transmembrane transporter activity"/>
    <property type="evidence" value="ECO:0000314"/>
    <property type="project" value="TAIR"/>
</dbReference>
<dbReference type="GO" id="GO:0015706">
    <property type="term" value="P:nitrate transmembrane transport"/>
    <property type="evidence" value="ECO:0000314"/>
    <property type="project" value="TAIR"/>
</dbReference>
<dbReference type="CDD" id="cd17416">
    <property type="entry name" value="MFS_NPF1_2"/>
    <property type="match status" value="1"/>
</dbReference>
<dbReference type="Gene3D" id="1.20.1250.20">
    <property type="entry name" value="MFS general substrate transporter like domains"/>
    <property type="match status" value="1"/>
</dbReference>
<dbReference type="InterPro" id="IPR036259">
    <property type="entry name" value="MFS_trans_sf"/>
</dbReference>
<dbReference type="InterPro" id="IPR000109">
    <property type="entry name" value="POT_fam"/>
</dbReference>
<dbReference type="PANTHER" id="PTHR11654">
    <property type="entry name" value="OLIGOPEPTIDE TRANSPORTER-RELATED"/>
    <property type="match status" value="1"/>
</dbReference>
<dbReference type="Pfam" id="PF00854">
    <property type="entry name" value="PTR2"/>
    <property type="match status" value="1"/>
</dbReference>
<dbReference type="SUPFAM" id="SSF103473">
    <property type="entry name" value="MFS general substrate transporter"/>
    <property type="match status" value="1"/>
</dbReference>
<comment type="function">
    <text evidence="3">Low-affinity nitrate transporter involved in xylem-to-phloem transfer for redistributing nitrate into developing leaves. Not involved in dipeptides transport.</text>
</comment>
<comment type="biophysicochemical properties">
    <kinetics>
        <KM evidence="3">9.2 mM for nitrate</KM>
    </kinetics>
</comment>
<comment type="subcellular location">
    <subcellularLocation>
        <location evidence="3">Cell membrane</location>
        <topology evidence="3">Multi-pass membrane protein</topology>
    </subcellularLocation>
</comment>
<comment type="tissue specificity">
    <text evidence="2 3">Expressed in siliques, shoots and roots. Mainly detected in larger expanded leaves, in the companion cells of major veins.</text>
</comment>
<comment type="disruption phenotype">
    <text evidence="3">Nrt1.11 and nrt1.12 double mutant is defective in high-nitrate-enhanced growth.</text>
</comment>
<comment type="similarity">
    <text evidence="4">Belongs to the major facilitator superfamily. Proton-dependent oligopeptide transporter (POT/PTR) (TC 2.A.17) family.</text>
</comment>
<comment type="sequence caution" evidence="4">
    <conflict type="erroneous gene model prediction">
        <sequence resource="EMBL-CDS" id="BAB02684"/>
    </conflict>
</comment>
<feature type="chain" id="PRO_0000399966" description="Protein NRT1/ PTR FAMILY 1.1">
    <location>
        <begin position="1"/>
        <end position="591"/>
    </location>
</feature>
<feature type="transmembrane region" description="Helical" evidence="1">
    <location>
        <begin position="68"/>
        <end position="88"/>
    </location>
</feature>
<feature type="transmembrane region" description="Helical" evidence="1">
    <location>
        <begin position="98"/>
        <end position="118"/>
    </location>
</feature>
<feature type="transmembrane region" description="Helical" evidence="1">
    <location>
        <begin position="139"/>
        <end position="159"/>
    </location>
</feature>
<feature type="transmembrane region" description="Helical" evidence="1">
    <location>
        <begin position="186"/>
        <end position="206"/>
    </location>
</feature>
<feature type="transmembrane region" description="Helical" evidence="1">
    <location>
        <begin position="216"/>
        <end position="236"/>
    </location>
</feature>
<feature type="transmembrane region" description="Helical" evidence="1">
    <location>
        <begin position="329"/>
        <end position="349"/>
    </location>
</feature>
<feature type="transmembrane region" description="Helical" evidence="1">
    <location>
        <begin position="374"/>
        <end position="394"/>
    </location>
</feature>
<feature type="transmembrane region" description="Helical" evidence="1">
    <location>
        <begin position="418"/>
        <end position="438"/>
    </location>
</feature>
<feature type="transmembrane region" description="Helical" evidence="1">
    <location>
        <begin position="460"/>
        <end position="480"/>
    </location>
</feature>
<feature type="transmembrane region" description="Helical" evidence="1">
    <location>
        <begin position="496"/>
        <end position="516"/>
    </location>
</feature>
<feature type="transmembrane region" description="Helical" evidence="1">
    <location>
        <begin position="543"/>
        <end position="563"/>
    </location>
</feature>
<reference key="1">
    <citation type="journal article" date="2000" name="DNA Res.">
        <title>Structural analysis of Arabidopsis thaliana chromosome 3. I. Sequence features of the regions of 4,504,864 bp covered by sixty P1 and TAC clones.</title>
        <authorList>
            <person name="Sato S."/>
            <person name="Nakamura Y."/>
            <person name="Kaneko T."/>
            <person name="Katoh T."/>
            <person name="Asamizu E."/>
            <person name="Tabata S."/>
        </authorList>
    </citation>
    <scope>NUCLEOTIDE SEQUENCE [LARGE SCALE GENOMIC DNA]</scope>
    <source>
        <strain>cv. Columbia</strain>
    </source>
</reference>
<reference key="2">
    <citation type="journal article" date="2017" name="Plant J.">
        <title>Araport11: a complete reannotation of the Arabidopsis thaliana reference genome.</title>
        <authorList>
            <person name="Cheng C.Y."/>
            <person name="Krishnakumar V."/>
            <person name="Chan A.P."/>
            <person name="Thibaud-Nissen F."/>
            <person name="Schobel S."/>
            <person name="Town C.D."/>
        </authorList>
    </citation>
    <scope>GENOME REANNOTATION</scope>
    <source>
        <strain>cv. Columbia</strain>
    </source>
</reference>
<reference key="3">
    <citation type="journal article" date="2003" name="Science">
        <title>Empirical analysis of transcriptional activity in the Arabidopsis genome.</title>
        <authorList>
            <person name="Yamada K."/>
            <person name="Lim J."/>
            <person name="Dale J.M."/>
            <person name="Chen H."/>
            <person name="Shinn P."/>
            <person name="Palm C.J."/>
            <person name="Southwick A.M."/>
            <person name="Wu H.C."/>
            <person name="Kim C.J."/>
            <person name="Nguyen M."/>
            <person name="Pham P.K."/>
            <person name="Cheuk R.F."/>
            <person name="Karlin-Newmann G."/>
            <person name="Liu S.X."/>
            <person name="Lam B."/>
            <person name="Sakano H."/>
            <person name="Wu T."/>
            <person name="Yu G."/>
            <person name="Miranda M."/>
            <person name="Quach H.L."/>
            <person name="Tripp M."/>
            <person name="Chang C.H."/>
            <person name="Lee J.M."/>
            <person name="Toriumi M.J."/>
            <person name="Chan M.M."/>
            <person name="Tang C.C."/>
            <person name="Onodera C.S."/>
            <person name="Deng J.M."/>
            <person name="Akiyama K."/>
            <person name="Ansari Y."/>
            <person name="Arakawa T."/>
            <person name="Banh J."/>
            <person name="Banno F."/>
            <person name="Bowser L."/>
            <person name="Brooks S.Y."/>
            <person name="Carninci P."/>
            <person name="Chao Q."/>
            <person name="Choy N."/>
            <person name="Enju A."/>
            <person name="Goldsmith A.D."/>
            <person name="Gurjal M."/>
            <person name="Hansen N.F."/>
            <person name="Hayashizaki Y."/>
            <person name="Johnson-Hopson C."/>
            <person name="Hsuan V.W."/>
            <person name="Iida K."/>
            <person name="Karnes M."/>
            <person name="Khan S."/>
            <person name="Koesema E."/>
            <person name="Ishida J."/>
            <person name="Jiang P.X."/>
            <person name="Jones T."/>
            <person name="Kawai J."/>
            <person name="Kamiya A."/>
            <person name="Meyers C."/>
            <person name="Nakajima M."/>
            <person name="Narusaka M."/>
            <person name="Seki M."/>
            <person name="Sakurai T."/>
            <person name="Satou M."/>
            <person name="Tamse R."/>
            <person name="Vaysberg M."/>
            <person name="Wallender E.K."/>
            <person name="Wong C."/>
            <person name="Yamamura Y."/>
            <person name="Yuan S."/>
            <person name="Shinozaki K."/>
            <person name="Davis R.W."/>
            <person name="Theologis A."/>
            <person name="Ecker J.R."/>
        </authorList>
    </citation>
    <scope>NUCLEOTIDE SEQUENCE [LARGE SCALE MRNA] OF 1-579</scope>
    <source>
        <strain>cv. Columbia</strain>
    </source>
</reference>
<reference key="4">
    <citation type="journal article" date="2007" name="FEBS Lett.">
        <title>Nitrate transporters and peptide transporters.</title>
        <authorList>
            <person name="Tsay Y.F."/>
            <person name="Chiu C.C."/>
            <person name="Tsai C.B."/>
            <person name="Ho C.H."/>
            <person name="Hsu P.K."/>
        </authorList>
    </citation>
    <scope>TISSUE SPECIFICITY</scope>
    <scope>GENE FAMILY</scope>
</reference>
<reference key="5">
    <citation type="journal article" date="2010" name="Plant Cell">
        <title>The Arabidopsis nitrate transporter NRT1.8 functions in nitrate removal from the xylem sap and mediates cadmium tolerance.</title>
        <authorList>
            <person name="Li J.Y."/>
            <person name="Fu Y.L."/>
            <person name="Pike S.M."/>
            <person name="Bao J."/>
            <person name="Tian W."/>
            <person name="Zhang Y."/>
            <person name="Chen C.Z."/>
            <person name="Zhang Y."/>
            <person name="Li H.M."/>
            <person name="Huang J."/>
            <person name="Li L.G."/>
            <person name="Schroeder J.I."/>
            <person name="Gassmann W."/>
            <person name="Gong J.M."/>
        </authorList>
    </citation>
    <scope>GENE FAMILY</scope>
</reference>
<reference key="6">
    <citation type="journal article" date="2013" name="Plant Physiol.">
        <title>Two phloem nitrate transporters, NRT1.11 and NRT1.12, are important for redistributing xylem-borne nitrate to enhance plant growth.</title>
        <authorList>
            <person name="Hsu P.K."/>
            <person name="Tsay Y.F."/>
        </authorList>
    </citation>
    <scope>FUNCTION</scope>
    <scope>BIOPHYSICOCHEMICAL PROPERTIES</scope>
    <scope>TISSUE SPECIFICITY</scope>
    <scope>SUBCELLULAR LOCATION</scope>
    <scope>DISRUPTION PHENOTYPE</scope>
</reference>
<reference key="7">
    <citation type="journal article" date="2014" name="Trends Plant Sci.">
        <title>A unified nomenclature of NITRATE TRANSPORTER 1/PEPTIDE TRANSPORTER family members in plants.</title>
        <authorList>
            <person name="Leran S."/>
            <person name="Varala K."/>
            <person name="Boyer J.C."/>
            <person name="Chiurazzi M."/>
            <person name="Crawford N."/>
            <person name="Daniel-Vedele F."/>
            <person name="David L."/>
            <person name="Dickstein R."/>
            <person name="Fernandez E."/>
            <person name="Forde B."/>
            <person name="Gassmann W."/>
            <person name="Geiger D."/>
            <person name="Gojon A."/>
            <person name="Gong J.M."/>
            <person name="Halkier B.A."/>
            <person name="Harris J.M."/>
            <person name="Hedrich R."/>
            <person name="Limami A.M."/>
            <person name="Rentsch D."/>
            <person name="Seo M."/>
            <person name="Tsay Y.F."/>
            <person name="Zhang M."/>
            <person name="Coruzzi G."/>
            <person name="Lacombe B."/>
        </authorList>
    </citation>
    <scope>GENE FAMILY</scope>
    <scope>NOMENCLATURE</scope>
</reference>
<proteinExistence type="evidence at protein level"/>
<keyword id="KW-1003">Cell membrane</keyword>
<keyword id="KW-0472">Membrane</keyword>
<keyword id="KW-1185">Reference proteome</keyword>
<keyword id="KW-0812">Transmembrane</keyword>
<keyword id="KW-1133">Transmembrane helix</keyword>
<keyword id="KW-0813">Transport</keyword>
<protein>
    <recommendedName>
        <fullName>Protein NRT1/ PTR FAMILY 1.1</fullName>
        <shortName>AtNPF1.1</shortName>
    </recommendedName>
    <alternativeName>
        <fullName>Nitrate transporter 1.12</fullName>
    </alternativeName>
</protein>
<name>PTR32_ARATH</name>
<gene>
    <name type="primary">NPF1.1</name>
    <name type="synonym">NTR1.12</name>
    <name type="ordered locus">At3g16180</name>
    <name type="ORF">MSL1.22</name>
</gene>